<proteinExistence type="predicted"/>
<organismHost>
    <name type="scientific">Homo sapiens</name>
    <name type="common">Human</name>
    <dbReference type="NCBI Taxonomy" id="9606"/>
</organismHost>
<accession>P11817</accession>
<organism>
    <name type="scientific">Human adenovirus B serotype 3</name>
    <name type="common">HAdV-3</name>
    <name type="synonym">Human adenovirus 3</name>
    <dbReference type="NCBI Taxonomy" id="45659"/>
    <lineage>
        <taxon>Viruses</taxon>
        <taxon>Varidnaviria</taxon>
        <taxon>Bamfordvirae</taxon>
        <taxon>Preplasmiviricota</taxon>
        <taxon>Tectiliviricetes</taxon>
        <taxon>Rowavirales</taxon>
        <taxon>Adenoviridae</taxon>
        <taxon>Mastadenovirus</taxon>
        <taxon>Human mastadenovirus B</taxon>
    </lineage>
</organism>
<sequence>FKAVRGERLVYSVKWEGGGKITTRIL</sequence>
<name>E417_ADE03</name>
<keyword id="KW-0244">Early protein</keyword>
<protein>
    <recommendedName>
        <fullName>Probable early E4 17 kDa protein</fullName>
    </recommendedName>
</protein>
<dbReference type="EMBL" id="X01998">
    <property type="protein sequence ID" value="CAA26030.1"/>
    <property type="molecule type" value="Genomic_DNA"/>
</dbReference>
<reference key="1">
    <citation type="journal article" date="1985" name="J. Virol.">
        <title>Adenovirus 3 fiber polypeptide gene: implications for the structure of the fiber protein.</title>
        <authorList>
            <person name="Signaes C."/>
            <person name="Akusjaervi G."/>
            <person name="Pettersson U."/>
        </authorList>
    </citation>
    <scope>NUCLEOTIDE SEQUENCE [GENOMIC DNA]</scope>
</reference>
<feature type="chain" id="PRO_0000221775" description="Probable early E4 17 kDa protein">
    <location>
        <begin position="1" status="less than"/>
        <end position="26"/>
    </location>
</feature>
<feature type="non-terminal residue">
    <location>
        <position position="1"/>
    </location>
</feature>